<organism>
    <name type="scientific">Takifugu rubripes</name>
    <name type="common">Japanese pufferfish</name>
    <name type="synonym">Fugu rubripes</name>
    <dbReference type="NCBI Taxonomy" id="31033"/>
    <lineage>
        <taxon>Eukaryota</taxon>
        <taxon>Metazoa</taxon>
        <taxon>Chordata</taxon>
        <taxon>Craniata</taxon>
        <taxon>Vertebrata</taxon>
        <taxon>Euteleostomi</taxon>
        <taxon>Actinopterygii</taxon>
        <taxon>Neopterygii</taxon>
        <taxon>Teleostei</taxon>
        <taxon>Neoteleostei</taxon>
        <taxon>Acanthomorphata</taxon>
        <taxon>Eupercaria</taxon>
        <taxon>Tetraodontiformes</taxon>
        <taxon>Tetradontoidea</taxon>
        <taxon>Tetraodontidae</taxon>
        <taxon>Takifugu</taxon>
    </lineage>
</organism>
<feature type="signal peptide" evidence="3">
    <location>
        <begin position="1"/>
        <end position="21"/>
    </location>
</feature>
<feature type="propeptide" id="PRO_0000001585" evidence="1">
    <location>
        <begin position="22"/>
        <end position="136"/>
    </location>
</feature>
<feature type="peptide" id="PRO_0000001586" description="C-type natriuretic peptide 3">
    <location>
        <begin position="137"/>
        <end position="158"/>
    </location>
</feature>
<feature type="region of interest" description="Disordered" evidence="4">
    <location>
        <begin position="32"/>
        <end position="95"/>
    </location>
</feature>
<feature type="compositionally biased region" description="Basic and acidic residues" evidence="4">
    <location>
        <begin position="47"/>
        <end position="64"/>
    </location>
</feature>
<feature type="compositionally biased region" description="Acidic residues" evidence="4">
    <location>
        <begin position="65"/>
        <end position="86"/>
    </location>
</feature>
<feature type="disulfide bond" evidence="2">
    <location>
        <begin position="142"/>
        <end position="158"/>
    </location>
</feature>
<gene>
    <name evidence="7" type="primary">cnp-3</name>
</gene>
<name>ANFC3_TAKRU</name>
<evidence type="ECO:0000250" key="1"/>
<evidence type="ECO:0000250" key="2">
    <source>
        <dbReference type="UniProtKB" id="P18145"/>
    </source>
</evidence>
<evidence type="ECO:0000255" key="3"/>
<evidence type="ECO:0000256" key="4">
    <source>
        <dbReference type="SAM" id="MobiDB-lite"/>
    </source>
</evidence>
<evidence type="ECO:0000303" key="5">
    <source>
    </source>
</evidence>
<evidence type="ECO:0000305" key="6"/>
<evidence type="ECO:0000312" key="7">
    <source>
        <dbReference type="EMBL" id="BAC57073.1"/>
    </source>
</evidence>
<reference evidence="7" key="1">
    <citation type="journal article" date="2003" name="Proc. Natl. Acad. Sci. U.S.A.">
        <title>Four functionally distinct C-type natriuretic peptides found in fish reveal evolutionary history of the natriuretic peptide system.</title>
        <authorList>
            <person name="Inoue K."/>
            <person name="Naruse K."/>
            <person name="Yamagami S."/>
            <person name="Mitani H."/>
            <person name="Suzuki N."/>
            <person name="Takei Y."/>
        </authorList>
    </citation>
    <scope>NUCLEOTIDE SEQUENCE [MRNA]</scope>
    <source>
        <tissue evidence="7">Heart</tissue>
    </source>
</reference>
<dbReference type="EMBL" id="AB089937">
    <property type="protein sequence ID" value="BAC57073.1"/>
    <property type="molecule type" value="mRNA"/>
</dbReference>
<dbReference type="FunCoup" id="Q805D4">
    <property type="interactions" value="27"/>
</dbReference>
<dbReference type="STRING" id="31033.ENSTRUP00000009486"/>
<dbReference type="KEGG" id="tru:445906"/>
<dbReference type="CTD" id="567953"/>
<dbReference type="InParanoid" id="Q805D4"/>
<dbReference type="Proteomes" id="UP000005226">
    <property type="component" value="Unplaced"/>
</dbReference>
<dbReference type="GO" id="GO:0005576">
    <property type="term" value="C:extracellular region"/>
    <property type="evidence" value="ECO:0007669"/>
    <property type="project" value="UniProtKB-SubCell"/>
</dbReference>
<dbReference type="GO" id="GO:0005179">
    <property type="term" value="F:hormone activity"/>
    <property type="evidence" value="ECO:0007669"/>
    <property type="project" value="UniProtKB-KW"/>
</dbReference>
<dbReference type="GO" id="GO:0097746">
    <property type="term" value="P:blood vessel diameter maintenance"/>
    <property type="evidence" value="ECO:0007669"/>
    <property type="project" value="UniProtKB-KW"/>
</dbReference>
<dbReference type="GO" id="GO:0006182">
    <property type="term" value="P:cGMP biosynthetic process"/>
    <property type="evidence" value="ECO:0007669"/>
    <property type="project" value="TreeGrafter"/>
</dbReference>
<dbReference type="GO" id="GO:0007168">
    <property type="term" value="P:receptor guanylyl cyclase signaling pathway"/>
    <property type="evidence" value="ECO:0007669"/>
    <property type="project" value="TreeGrafter"/>
</dbReference>
<dbReference type="InterPro" id="IPR002406">
    <property type="entry name" value="C_natriurtcpep"/>
</dbReference>
<dbReference type="InterPro" id="IPR000663">
    <property type="entry name" value="Natr_peptide"/>
</dbReference>
<dbReference type="InterPro" id="IPR030480">
    <property type="entry name" value="Natr_peptide_CS"/>
</dbReference>
<dbReference type="PANTHER" id="PTHR12167">
    <property type="entry name" value="C-TYPE NATRIURETIC PEPTIDE"/>
    <property type="match status" value="1"/>
</dbReference>
<dbReference type="PANTHER" id="PTHR12167:SF5">
    <property type="entry name" value="C-TYPE NATRIURETIC PEPTIDE 3-LIKE PRECURSOR"/>
    <property type="match status" value="1"/>
</dbReference>
<dbReference type="Pfam" id="PF00212">
    <property type="entry name" value="ANP"/>
    <property type="match status" value="1"/>
</dbReference>
<dbReference type="PRINTS" id="PR00713">
    <property type="entry name" value="CNATPEPTIDE"/>
</dbReference>
<dbReference type="SMART" id="SM00183">
    <property type="entry name" value="NAT_PEP"/>
    <property type="match status" value="1"/>
</dbReference>
<dbReference type="PROSITE" id="PS00263">
    <property type="entry name" value="NATRIURETIC_PEPTIDE"/>
    <property type="match status" value="1"/>
</dbReference>
<accession>Q805D4</accession>
<comment type="function">
    <text evidence="2 5">Exhibits natriuretic and vasodepressant activity. Has cGMP-stimulating activity. May help to regulate body fluid homeostasis in a variety of aquatic environments.</text>
</comment>
<comment type="subcellular location">
    <subcellularLocation>
        <location evidence="6">Secreted</location>
    </subcellularLocation>
</comment>
<comment type="similarity">
    <text evidence="3">Belongs to the natriuretic peptide family.</text>
</comment>
<protein>
    <recommendedName>
        <fullName>C-type natriuretic peptide 3</fullName>
    </recommendedName>
</protein>
<proteinExistence type="evidence at transcript level"/>
<sequence>MSLNLPGYALFFILLVASSGAKPAPDLQILEPPLSSLEEQEEMQEEVQEKVQEQQEEVQEKVQEQQEEVQEQQEEVQEQQEEQQEEVQERGRGTGDVLLRAQLDSSTWALQKDDVLMRLFKDLLRTSKRSRSRYKKGGLRSCFGVRLARIGSFSGLGC</sequence>
<keyword id="KW-0165">Cleavage on pair of basic residues</keyword>
<keyword id="KW-1015">Disulfide bond</keyword>
<keyword id="KW-0372">Hormone</keyword>
<keyword id="KW-1185">Reference proteome</keyword>
<keyword id="KW-0964">Secreted</keyword>
<keyword id="KW-0732">Signal</keyword>
<keyword id="KW-0838">Vasoactive</keyword>